<proteinExistence type="evidence at transcript level"/>
<feature type="signal peptide" evidence="4">
    <location>
        <begin position="1"/>
        <end position="25"/>
    </location>
</feature>
<feature type="chain" id="PRO_0000017161" description="Lipopolysaccharide-binding protein">
    <location>
        <begin position="26"/>
        <end position="481"/>
    </location>
</feature>
<feature type="glycosylation site" description="N-linked (GlcNAc...) asparagine" evidence="4">
    <location>
        <position position="300"/>
    </location>
</feature>
<feature type="glycosylation site" description="N-linked (GlcNAc...) asparagine" evidence="4">
    <location>
        <position position="355"/>
    </location>
</feature>
<feature type="disulfide bond" evidence="3">
    <location>
        <begin position="159"/>
        <end position="198"/>
    </location>
</feature>
<dbReference type="EMBL" id="L32132">
    <property type="protein sequence ID" value="AAA21835.1"/>
    <property type="molecule type" value="mRNA"/>
</dbReference>
<dbReference type="PIR" id="I56246">
    <property type="entry name" value="I56246"/>
</dbReference>
<dbReference type="SMR" id="Q63313"/>
<dbReference type="FunCoup" id="Q63313">
    <property type="interactions" value="17"/>
</dbReference>
<dbReference type="STRING" id="10116.ENSRNOP00000019787"/>
<dbReference type="GlyCosmos" id="Q63313">
    <property type="glycosylation" value="2 sites, No reported glycans"/>
</dbReference>
<dbReference type="GlyGen" id="Q63313">
    <property type="glycosylation" value="3 sites"/>
</dbReference>
<dbReference type="PhosphoSitePlus" id="Q63313"/>
<dbReference type="PaxDb" id="10116-ENSRNOP00000019787"/>
<dbReference type="AGR" id="RGD:61865"/>
<dbReference type="RGD" id="61865">
    <property type="gene designation" value="Lbp"/>
</dbReference>
<dbReference type="eggNOG" id="KOG4160">
    <property type="taxonomic scope" value="Eukaryota"/>
</dbReference>
<dbReference type="InParanoid" id="Q63313"/>
<dbReference type="PhylomeDB" id="Q63313"/>
<dbReference type="Reactome" id="R-RNO-166016">
    <property type="pathway name" value="Toll Like Receptor 4 (TLR4) Cascade"/>
</dbReference>
<dbReference type="Reactome" id="R-RNO-166020">
    <property type="pathway name" value="Transfer of LPS from LBP carrier to CD14"/>
</dbReference>
<dbReference type="Reactome" id="R-RNO-5686938">
    <property type="pathway name" value="Regulation of TLR by endogenous ligand"/>
</dbReference>
<dbReference type="PRO" id="PR:Q63313"/>
<dbReference type="Proteomes" id="UP000002494">
    <property type="component" value="Unplaced"/>
</dbReference>
<dbReference type="GO" id="GO:0009986">
    <property type="term" value="C:cell surface"/>
    <property type="evidence" value="ECO:0000266"/>
    <property type="project" value="RGD"/>
</dbReference>
<dbReference type="GO" id="GO:0005615">
    <property type="term" value="C:extracellular space"/>
    <property type="evidence" value="ECO:0000314"/>
    <property type="project" value="RGD"/>
</dbReference>
<dbReference type="GO" id="GO:0016020">
    <property type="term" value="C:membrane"/>
    <property type="evidence" value="ECO:0007669"/>
    <property type="project" value="UniProtKB-KW"/>
</dbReference>
<dbReference type="GO" id="GO:0015026">
    <property type="term" value="F:coreceptor activity"/>
    <property type="evidence" value="ECO:0000266"/>
    <property type="project" value="RGD"/>
</dbReference>
<dbReference type="GO" id="GO:0071723">
    <property type="term" value="F:lipopeptide binding"/>
    <property type="evidence" value="ECO:0000266"/>
    <property type="project" value="RGD"/>
</dbReference>
<dbReference type="GO" id="GO:0001530">
    <property type="term" value="F:lipopolysaccharide binding"/>
    <property type="evidence" value="ECO:0000314"/>
    <property type="project" value="RGD"/>
</dbReference>
<dbReference type="GO" id="GO:0070891">
    <property type="term" value="F:lipoteichoic acid binding"/>
    <property type="evidence" value="ECO:0000266"/>
    <property type="project" value="RGD"/>
</dbReference>
<dbReference type="GO" id="GO:0005102">
    <property type="term" value="F:signaling receptor binding"/>
    <property type="evidence" value="ECO:0000266"/>
    <property type="project" value="RGD"/>
</dbReference>
<dbReference type="GO" id="GO:0006953">
    <property type="term" value="P:acute-phase response"/>
    <property type="evidence" value="ECO:0000266"/>
    <property type="project" value="RGD"/>
</dbReference>
<dbReference type="GO" id="GO:0002752">
    <property type="term" value="P:cell surface pattern recognition receptor signaling pathway"/>
    <property type="evidence" value="ECO:0000266"/>
    <property type="project" value="RGD"/>
</dbReference>
<dbReference type="GO" id="GO:0071222">
    <property type="term" value="P:cellular response to lipopolysaccharide"/>
    <property type="evidence" value="ECO:0000250"/>
    <property type="project" value="UniProtKB"/>
</dbReference>
<dbReference type="GO" id="GO:0071223">
    <property type="term" value="P:cellular response to lipoteichoic acid"/>
    <property type="evidence" value="ECO:0000266"/>
    <property type="project" value="RGD"/>
</dbReference>
<dbReference type="GO" id="GO:0050829">
    <property type="term" value="P:defense response to Gram-negative bacterium"/>
    <property type="evidence" value="ECO:0000266"/>
    <property type="project" value="RGD"/>
</dbReference>
<dbReference type="GO" id="GO:0050830">
    <property type="term" value="P:defense response to Gram-positive bacterium"/>
    <property type="evidence" value="ECO:0000266"/>
    <property type="project" value="RGD"/>
</dbReference>
<dbReference type="GO" id="GO:0032490">
    <property type="term" value="P:detection of molecule of bacterial origin"/>
    <property type="evidence" value="ECO:0000266"/>
    <property type="project" value="RGD"/>
</dbReference>
<dbReference type="GO" id="GO:0045087">
    <property type="term" value="P:innate immune response"/>
    <property type="evidence" value="ECO:0000266"/>
    <property type="project" value="RGD"/>
</dbReference>
<dbReference type="GO" id="GO:0002232">
    <property type="term" value="P:leukocyte chemotaxis involved in inflammatory response"/>
    <property type="evidence" value="ECO:0000266"/>
    <property type="project" value="RGD"/>
</dbReference>
<dbReference type="GO" id="GO:0015920">
    <property type="term" value="P:lipopolysaccharide transport"/>
    <property type="evidence" value="ECO:0000266"/>
    <property type="project" value="RGD"/>
</dbReference>
<dbReference type="GO" id="GO:0031663">
    <property type="term" value="P:lipopolysaccharide-mediated signaling pathway"/>
    <property type="evidence" value="ECO:0000266"/>
    <property type="project" value="RGD"/>
</dbReference>
<dbReference type="GO" id="GO:0001889">
    <property type="term" value="P:liver development"/>
    <property type="evidence" value="ECO:0000270"/>
    <property type="project" value="RGD"/>
</dbReference>
<dbReference type="GO" id="GO:0002281">
    <property type="term" value="P:macrophage activation involved in immune response"/>
    <property type="evidence" value="ECO:0000250"/>
    <property type="project" value="UniProtKB"/>
</dbReference>
<dbReference type="GO" id="GO:0032720">
    <property type="term" value="P:negative regulation of tumor necrosis factor production"/>
    <property type="evidence" value="ECO:0000266"/>
    <property type="project" value="RGD"/>
</dbReference>
<dbReference type="GO" id="GO:0030593">
    <property type="term" value="P:neutrophil chemotaxis"/>
    <property type="evidence" value="ECO:0000266"/>
    <property type="project" value="RGD"/>
</dbReference>
<dbReference type="GO" id="GO:0032722">
    <property type="term" value="P:positive regulation of chemokine production"/>
    <property type="evidence" value="ECO:0000266"/>
    <property type="project" value="RGD"/>
</dbReference>
<dbReference type="GO" id="GO:0032755">
    <property type="term" value="P:positive regulation of interleukin-6 production"/>
    <property type="evidence" value="ECO:0000266"/>
    <property type="project" value="RGD"/>
</dbReference>
<dbReference type="GO" id="GO:0032757">
    <property type="term" value="P:positive regulation of interleukin-8 production"/>
    <property type="evidence" value="ECO:0000266"/>
    <property type="project" value="RGD"/>
</dbReference>
<dbReference type="GO" id="GO:0043032">
    <property type="term" value="P:positive regulation of macrophage activation"/>
    <property type="evidence" value="ECO:0000314"/>
    <property type="project" value="RGD"/>
</dbReference>
<dbReference type="GO" id="GO:0090023">
    <property type="term" value="P:positive regulation of neutrophil chemotaxis"/>
    <property type="evidence" value="ECO:0000266"/>
    <property type="project" value="RGD"/>
</dbReference>
<dbReference type="GO" id="GO:0060100">
    <property type="term" value="P:positive regulation of phagocytosis, engulfment"/>
    <property type="evidence" value="ECO:0000314"/>
    <property type="project" value="RGD"/>
</dbReference>
<dbReference type="GO" id="GO:0060265">
    <property type="term" value="P:positive regulation of respiratory burst involved in inflammatory response"/>
    <property type="evidence" value="ECO:0000266"/>
    <property type="project" value="RGD"/>
</dbReference>
<dbReference type="GO" id="GO:0034145">
    <property type="term" value="P:positive regulation of toll-like receptor 4 signaling pathway"/>
    <property type="evidence" value="ECO:0000266"/>
    <property type="project" value="RGD"/>
</dbReference>
<dbReference type="GO" id="GO:0032760">
    <property type="term" value="P:positive regulation of tumor necrosis factor production"/>
    <property type="evidence" value="ECO:0000250"/>
    <property type="project" value="UniProtKB"/>
</dbReference>
<dbReference type="GO" id="GO:0090559">
    <property type="term" value="P:regulation of membrane permeability"/>
    <property type="evidence" value="ECO:0000315"/>
    <property type="project" value="RGD"/>
</dbReference>
<dbReference type="GO" id="GO:0045471">
    <property type="term" value="P:response to ethanol"/>
    <property type="evidence" value="ECO:0000270"/>
    <property type="project" value="RGD"/>
</dbReference>
<dbReference type="GO" id="GO:0032496">
    <property type="term" value="P:response to lipopolysaccharide"/>
    <property type="evidence" value="ECO:0000266"/>
    <property type="project" value="RGD"/>
</dbReference>
<dbReference type="CDD" id="cd00025">
    <property type="entry name" value="BPI1"/>
    <property type="match status" value="1"/>
</dbReference>
<dbReference type="CDD" id="cd00026">
    <property type="entry name" value="BPI2"/>
    <property type="match status" value="1"/>
</dbReference>
<dbReference type="FunFam" id="3.15.20.10:FF:000001">
    <property type="entry name" value="Phospholipid transfer protein"/>
    <property type="match status" value="1"/>
</dbReference>
<dbReference type="FunFam" id="3.15.10.10:FF:000001">
    <property type="entry name" value="phospholipid transfer protein-like"/>
    <property type="match status" value="1"/>
</dbReference>
<dbReference type="Gene3D" id="3.15.10.10">
    <property type="entry name" value="Bactericidal permeability-increasing protein, domain 1"/>
    <property type="match status" value="1"/>
</dbReference>
<dbReference type="Gene3D" id="3.15.20.10">
    <property type="entry name" value="Bactericidal permeability-increasing protein, domain 2"/>
    <property type="match status" value="1"/>
</dbReference>
<dbReference type="InterPro" id="IPR017943">
    <property type="entry name" value="Bactericidal_perm-incr_a/b_dom"/>
</dbReference>
<dbReference type="InterPro" id="IPR030675">
    <property type="entry name" value="BPI/LBP"/>
</dbReference>
<dbReference type="InterPro" id="IPR032942">
    <property type="entry name" value="BPI/LBP/Plunc"/>
</dbReference>
<dbReference type="InterPro" id="IPR001124">
    <property type="entry name" value="Lipid-bd_serum_glycop_C"/>
</dbReference>
<dbReference type="InterPro" id="IPR017954">
    <property type="entry name" value="Lipid-bd_serum_glycop_CS"/>
</dbReference>
<dbReference type="InterPro" id="IPR017942">
    <property type="entry name" value="Lipid-bd_serum_glycop_N"/>
</dbReference>
<dbReference type="PANTHER" id="PTHR10504">
    <property type="entry name" value="BACTERICIDAL PERMEABILITY-INCREASING BPI PROTEIN-RELATED"/>
    <property type="match status" value="1"/>
</dbReference>
<dbReference type="PANTHER" id="PTHR10504:SF66">
    <property type="entry name" value="LIPOPOLYSACCHARIDE-BINDING PROTEIN"/>
    <property type="match status" value="1"/>
</dbReference>
<dbReference type="Pfam" id="PF01273">
    <property type="entry name" value="LBP_BPI_CETP"/>
    <property type="match status" value="1"/>
</dbReference>
<dbReference type="Pfam" id="PF02886">
    <property type="entry name" value="LBP_BPI_CETP_C"/>
    <property type="match status" value="1"/>
</dbReference>
<dbReference type="PIRSF" id="PIRSF002417">
    <property type="entry name" value="Lipid_binding_protein"/>
    <property type="match status" value="1"/>
</dbReference>
<dbReference type="SMART" id="SM00328">
    <property type="entry name" value="BPI1"/>
    <property type="match status" value="1"/>
</dbReference>
<dbReference type="SMART" id="SM00329">
    <property type="entry name" value="BPI2"/>
    <property type="match status" value="1"/>
</dbReference>
<dbReference type="SUPFAM" id="SSF55394">
    <property type="entry name" value="Bactericidal permeability-increasing protein, BPI"/>
    <property type="match status" value="2"/>
</dbReference>
<dbReference type="PROSITE" id="PS00400">
    <property type="entry name" value="LBP_BPI_CETP"/>
    <property type="match status" value="1"/>
</dbReference>
<comment type="function">
    <text evidence="2">Plays a role in the innate immune response. Binds to the lipid A moiety of bacterial lipopolysaccharides (LPS), a glycolipid present in the outer membrane of all Gram-negative bacteria. Acts as an affinity enhancer for CD14, facilitating its association with LPS. Promotes the release of cytokines in response to bacterial lipopolysaccharide.</text>
</comment>
<comment type="subunit">
    <text evidence="2">When bound to LPS, interacts (via C-terminus) with soluble and membrane-bound CD14.</text>
</comment>
<comment type="subcellular location">
    <subcellularLocation>
        <location evidence="2">Secreted</location>
    </subcellularLocation>
    <subcellularLocation>
        <location evidence="1">Cytoplasmic granule membrane</location>
    </subcellularLocation>
    <text evidence="1">Membrane-associated in polymorphonuclear Leukocytes (PMN) granules.</text>
</comment>
<comment type="tissue specificity">
    <text evidence="5">Detected in lung, liver, heart and kidney.</text>
</comment>
<comment type="similarity">
    <text evidence="6">Belongs to the BPI/LBP/Plunc superfamily. BPI/LBP family.</text>
</comment>
<gene>
    <name type="primary">Lbp</name>
</gene>
<keyword id="KW-0044">Antibiotic</keyword>
<keyword id="KW-0929">Antimicrobial</keyword>
<keyword id="KW-1015">Disulfide bond</keyword>
<keyword id="KW-0325">Glycoprotein</keyword>
<keyword id="KW-0391">Immunity</keyword>
<keyword id="KW-0399">Innate immunity</keyword>
<keyword id="KW-0445">Lipid transport</keyword>
<keyword id="KW-0472">Membrane</keyword>
<keyword id="KW-1185">Reference proteome</keyword>
<keyword id="KW-0964">Secreted</keyword>
<keyword id="KW-0732">Signal</keyword>
<keyword id="KW-0813">Transport</keyword>
<protein>
    <recommendedName>
        <fullName>Lipopolysaccharide-binding protein</fullName>
        <shortName>LBP</shortName>
    </recommendedName>
</protein>
<accession>Q63313</accession>
<organism>
    <name type="scientific">Rattus norvegicus</name>
    <name type="common">Rat</name>
    <dbReference type="NCBI Taxonomy" id="10116"/>
    <lineage>
        <taxon>Eukaryota</taxon>
        <taxon>Metazoa</taxon>
        <taxon>Chordata</taxon>
        <taxon>Craniata</taxon>
        <taxon>Vertebrata</taxon>
        <taxon>Euteleostomi</taxon>
        <taxon>Mammalia</taxon>
        <taxon>Eutheria</taxon>
        <taxon>Euarchontoglires</taxon>
        <taxon>Glires</taxon>
        <taxon>Rodentia</taxon>
        <taxon>Myomorpha</taxon>
        <taxon>Muroidea</taxon>
        <taxon>Muridae</taxon>
        <taxon>Murinae</taxon>
        <taxon>Rattus</taxon>
    </lineage>
</organism>
<sequence length="481" mass="53600">MKSATGPLLPTLLGLLLLSIPRTQGVNPAMVVRITDKGLEYAAKEGLLSLQRELYKITLPDFSGDFKIKAVGRGQYEFHSLEIQSCQLRGSSLKPLPGRGLSLSISDSSISVRGKWKVRRSFVKLHGSFDLDVKSVTISVDLLLGVDPSERPTVTASGCSNRIRDLELHVSGNVGWLLNLFHNQIESKLQKVLESKICEMIQKSVTSDLQPYLQTLPVTADIDTILGIDYSLVAAPQAKAQTLDVMFKGEIFNRNHRSPVTTPTPTMSLPEDSKQMVYFAISDQAFNIATRVYHQAGYLNFTITDDMLPPDSNIRLNTKAFRPFTPLITRKYPDMNLELLGTVVSAPLLNVSPGNLSLAPQMEIEGFVILPSSARESVFRLGVVTNVFVSLTFDNSKVTGMLHPEKAQVRLIESKVGMFNVNLFQAFLNYYLLNSLYPDVNDELAKGFPLPLPRRIKLHDLDFQIHKNFLYLGANVQYMRV</sequence>
<reference key="1">
    <citation type="journal article" date="1994" name="J. Immunol.">
        <title>Molecular cloning, characterization, and tissue distribution of rat lipopolysaccharide binding protein. Evidence for extrahepatic expression.</title>
        <authorList>
            <person name="Su G.L."/>
            <person name="Freeswick P.D."/>
            <person name="Geller D.A."/>
            <person name="Wang Q."/>
            <person name="Shapiro R.A."/>
            <person name="Wan Y.H."/>
            <person name="Billiar T.R."/>
            <person name="Tweardy D.J."/>
            <person name="Simmons R.L."/>
            <person name="Wang S.C."/>
        </authorList>
    </citation>
    <scope>NUCLEOTIDE SEQUENCE [MRNA]</scope>
    <scope>TISSUE SPECIFICITY</scope>
    <source>
        <strain>Sprague-Dawley</strain>
        <tissue>Liver</tissue>
    </source>
</reference>
<evidence type="ECO:0000250" key="1">
    <source>
        <dbReference type="UniProtKB" id="P17213"/>
    </source>
</evidence>
<evidence type="ECO:0000250" key="2">
    <source>
        <dbReference type="UniProtKB" id="P18428"/>
    </source>
</evidence>
<evidence type="ECO:0000250" key="3">
    <source>
        <dbReference type="UniProtKB" id="Q61805"/>
    </source>
</evidence>
<evidence type="ECO:0000255" key="4"/>
<evidence type="ECO:0000269" key="5">
    <source>
    </source>
</evidence>
<evidence type="ECO:0000305" key="6"/>
<name>LBP_RAT</name>